<proteinExistence type="evidence at transcript level"/>
<gene>
    <name type="primary">psmD12</name>
    <name type="ORF">DDB_G0281051</name>
</gene>
<feature type="chain" id="PRO_0000327460" description="26S proteasome non-ATPase regulatory subunit 12">
    <location>
        <begin position="1"/>
        <end position="447"/>
    </location>
</feature>
<feature type="domain" description="PCI" evidence="2">
    <location>
        <begin position="240"/>
        <end position="411"/>
    </location>
</feature>
<feature type="region of interest" description="Disordered" evidence="3">
    <location>
        <begin position="1"/>
        <end position="23"/>
    </location>
</feature>
<name>PSD12_DICDI</name>
<keyword id="KW-0647">Proteasome</keyword>
<keyword id="KW-1185">Reference proteome</keyword>
<evidence type="ECO:0000250" key="1"/>
<evidence type="ECO:0000255" key="2">
    <source>
        <dbReference type="PROSITE-ProRule" id="PRU01185"/>
    </source>
</evidence>
<evidence type="ECO:0000256" key="3">
    <source>
        <dbReference type="SAM" id="MobiDB-lite"/>
    </source>
</evidence>
<evidence type="ECO:0000305" key="4"/>
<accession>Q54UJ0</accession>
<protein>
    <recommendedName>
        <fullName>26S proteasome non-ATPase regulatory subunit 12</fullName>
    </recommendedName>
    <alternativeName>
        <fullName>26S proteasome regulatory subunit RPN5</fullName>
    </alternativeName>
    <alternativeName>
        <fullName>26S proteasome regulatory subunit p55</fullName>
    </alternativeName>
</protein>
<organism>
    <name type="scientific">Dictyostelium discoideum</name>
    <name type="common">Social amoeba</name>
    <dbReference type="NCBI Taxonomy" id="44689"/>
    <lineage>
        <taxon>Eukaryota</taxon>
        <taxon>Amoebozoa</taxon>
        <taxon>Evosea</taxon>
        <taxon>Eumycetozoa</taxon>
        <taxon>Dictyostelia</taxon>
        <taxon>Dictyosteliales</taxon>
        <taxon>Dictyosteliaceae</taxon>
        <taxon>Dictyostelium</taxon>
    </lineage>
</organism>
<dbReference type="EMBL" id="AAFI02000040">
    <property type="protein sequence ID" value="EAL66822.1"/>
    <property type="molecule type" value="Genomic_DNA"/>
</dbReference>
<dbReference type="RefSeq" id="XP_640786.1">
    <property type="nucleotide sequence ID" value="XM_635694.1"/>
</dbReference>
<dbReference type="SMR" id="Q54UJ0"/>
<dbReference type="FunCoup" id="Q54UJ0">
    <property type="interactions" value="1025"/>
</dbReference>
<dbReference type="STRING" id="44689.Q54UJ0"/>
<dbReference type="PaxDb" id="44689-DDB0232995"/>
<dbReference type="EnsemblProtists" id="EAL66822">
    <property type="protein sequence ID" value="EAL66822"/>
    <property type="gene ID" value="DDB_G0281051"/>
</dbReference>
<dbReference type="GeneID" id="8622839"/>
<dbReference type="KEGG" id="ddi:DDB_G0281051"/>
<dbReference type="dictyBase" id="DDB_G0281051">
    <property type="gene designation" value="psmD12"/>
</dbReference>
<dbReference type="VEuPathDB" id="AmoebaDB:DDB_G0281051"/>
<dbReference type="eggNOG" id="KOG1498">
    <property type="taxonomic scope" value="Eukaryota"/>
</dbReference>
<dbReference type="HOGENOM" id="CLU_033860_2_0_1"/>
<dbReference type="InParanoid" id="Q54UJ0"/>
<dbReference type="OMA" id="AENEMFK"/>
<dbReference type="PhylomeDB" id="Q54UJ0"/>
<dbReference type="Reactome" id="R-DDI-1236978">
    <property type="pathway name" value="Cross-presentation of soluble exogenous antigens (endosomes)"/>
</dbReference>
<dbReference type="Reactome" id="R-DDI-174084">
    <property type="pathway name" value="Autodegradation of Cdh1 by Cdh1:APC/C"/>
</dbReference>
<dbReference type="Reactome" id="R-DDI-174154">
    <property type="pathway name" value="APC/C:Cdc20 mediated degradation of Securin"/>
</dbReference>
<dbReference type="Reactome" id="R-DDI-174178">
    <property type="pathway name" value="APC/C:Cdh1 mediated degradation of Cdc20 and other APC/C:Cdh1 targeted proteins in late mitosis/early G1"/>
</dbReference>
<dbReference type="Reactome" id="R-DDI-2467813">
    <property type="pathway name" value="Separation of Sister Chromatids"/>
</dbReference>
<dbReference type="Reactome" id="R-DDI-349425">
    <property type="pathway name" value="Autodegradation of the E3 ubiquitin ligase COP1"/>
</dbReference>
<dbReference type="Reactome" id="R-DDI-382556">
    <property type="pathway name" value="ABC-family proteins mediated transport"/>
</dbReference>
<dbReference type="Reactome" id="R-DDI-450408">
    <property type="pathway name" value="AUF1 (hnRNP D0) binds and destabilizes mRNA"/>
</dbReference>
<dbReference type="Reactome" id="R-DDI-4641258">
    <property type="pathway name" value="Degradation of DVL"/>
</dbReference>
<dbReference type="Reactome" id="R-DDI-5632684">
    <property type="pathway name" value="Hedgehog 'on' state"/>
</dbReference>
<dbReference type="Reactome" id="R-DDI-5658442">
    <property type="pathway name" value="Regulation of RAS by GAPs"/>
</dbReference>
<dbReference type="Reactome" id="R-DDI-5687128">
    <property type="pathway name" value="MAPK6/MAPK4 signaling"/>
</dbReference>
<dbReference type="Reactome" id="R-DDI-5689603">
    <property type="pathway name" value="UCH proteinases"/>
</dbReference>
<dbReference type="Reactome" id="R-DDI-5689880">
    <property type="pathway name" value="Ub-specific processing proteases"/>
</dbReference>
<dbReference type="Reactome" id="R-DDI-6798695">
    <property type="pathway name" value="Neutrophil degranulation"/>
</dbReference>
<dbReference type="Reactome" id="R-DDI-68949">
    <property type="pathway name" value="Orc1 removal from chromatin"/>
</dbReference>
<dbReference type="Reactome" id="R-DDI-69017">
    <property type="pathway name" value="CDK-mediated phosphorylation and removal of Cdc6"/>
</dbReference>
<dbReference type="Reactome" id="R-DDI-69601">
    <property type="pathway name" value="Ubiquitin Mediated Degradation of Phosphorylated Cdc25A"/>
</dbReference>
<dbReference type="Reactome" id="R-DDI-8854050">
    <property type="pathway name" value="FBXL7 down-regulates AURKA during mitotic entry and in early mitosis"/>
</dbReference>
<dbReference type="Reactome" id="R-DDI-8948751">
    <property type="pathway name" value="Regulation of PTEN stability and activity"/>
</dbReference>
<dbReference type="Reactome" id="R-DDI-8951664">
    <property type="pathway name" value="Neddylation"/>
</dbReference>
<dbReference type="Reactome" id="R-DDI-9755511">
    <property type="pathway name" value="KEAP1-NFE2L2 pathway"/>
</dbReference>
<dbReference type="Reactome" id="R-DDI-983168">
    <property type="pathway name" value="Antigen processing: Ubiquitination &amp; Proteasome degradation"/>
</dbReference>
<dbReference type="Reactome" id="R-DDI-9907900">
    <property type="pathway name" value="Proteasome assembly"/>
</dbReference>
<dbReference type="PRO" id="PR:Q54UJ0"/>
<dbReference type="Proteomes" id="UP000002195">
    <property type="component" value="Chromosome 3"/>
</dbReference>
<dbReference type="GO" id="GO:0005737">
    <property type="term" value="C:cytoplasm"/>
    <property type="evidence" value="ECO:0000318"/>
    <property type="project" value="GO_Central"/>
</dbReference>
<dbReference type="GO" id="GO:0008541">
    <property type="term" value="C:proteasome regulatory particle, lid subcomplex"/>
    <property type="evidence" value="ECO:0000318"/>
    <property type="project" value="GO_Central"/>
</dbReference>
<dbReference type="FunFam" id="1.10.10.10:FF:000070">
    <property type="entry name" value="26S proteasome non-ATPase regulatory subunit 12"/>
    <property type="match status" value="1"/>
</dbReference>
<dbReference type="Gene3D" id="1.10.10.10">
    <property type="entry name" value="Winged helix-like DNA-binding domain superfamily/Winged helix DNA-binding domain"/>
    <property type="match status" value="1"/>
</dbReference>
<dbReference type="InterPro" id="IPR000717">
    <property type="entry name" value="PCI_dom"/>
</dbReference>
<dbReference type="InterPro" id="IPR054559">
    <property type="entry name" value="PSMD12-CSN4-like_N"/>
</dbReference>
<dbReference type="InterPro" id="IPR040134">
    <property type="entry name" value="PSMD12/CSN4"/>
</dbReference>
<dbReference type="InterPro" id="IPR040896">
    <property type="entry name" value="RPN5_C"/>
</dbReference>
<dbReference type="InterPro" id="IPR036388">
    <property type="entry name" value="WH-like_DNA-bd_sf"/>
</dbReference>
<dbReference type="InterPro" id="IPR036390">
    <property type="entry name" value="WH_DNA-bd_sf"/>
</dbReference>
<dbReference type="PANTHER" id="PTHR10855:SF1">
    <property type="entry name" value="26S PROTEASOME NON-ATPASE REGULATORY SUBUNIT 12"/>
    <property type="match status" value="1"/>
</dbReference>
<dbReference type="PANTHER" id="PTHR10855">
    <property type="entry name" value="26S PROTEASOME NON-ATPASE REGULATORY SUBUNIT 12/COP9 SIGNALOSOME COMPLEX SUBUNIT 4"/>
    <property type="match status" value="1"/>
</dbReference>
<dbReference type="Pfam" id="PF01399">
    <property type="entry name" value="PCI"/>
    <property type="match status" value="1"/>
</dbReference>
<dbReference type="Pfam" id="PF22241">
    <property type="entry name" value="PSMD12-CSN4_N"/>
    <property type="match status" value="1"/>
</dbReference>
<dbReference type="Pfam" id="PF18098">
    <property type="entry name" value="RPN5_C"/>
    <property type="match status" value="1"/>
</dbReference>
<dbReference type="SMART" id="SM00088">
    <property type="entry name" value="PINT"/>
    <property type="match status" value="1"/>
</dbReference>
<dbReference type="SUPFAM" id="SSF46785">
    <property type="entry name" value="Winged helix' DNA-binding domain"/>
    <property type="match status" value="1"/>
</dbReference>
<dbReference type="PROSITE" id="PS50250">
    <property type="entry name" value="PCI"/>
    <property type="match status" value="1"/>
</dbReference>
<comment type="function">
    <text evidence="1">Acts as a regulatory subunit of the 26S proteasome which is involved in the ATP-dependent degradation of ubiquitinated proteins.</text>
</comment>
<comment type="similarity">
    <text evidence="4">Belongs to the proteasome subunit p55 family.</text>
</comment>
<reference key="1">
    <citation type="journal article" date="2005" name="Nature">
        <title>The genome of the social amoeba Dictyostelium discoideum.</title>
        <authorList>
            <person name="Eichinger L."/>
            <person name="Pachebat J.A."/>
            <person name="Gloeckner G."/>
            <person name="Rajandream M.A."/>
            <person name="Sucgang R."/>
            <person name="Berriman M."/>
            <person name="Song J."/>
            <person name="Olsen R."/>
            <person name="Szafranski K."/>
            <person name="Xu Q."/>
            <person name="Tunggal B."/>
            <person name="Kummerfeld S."/>
            <person name="Madera M."/>
            <person name="Konfortov B.A."/>
            <person name="Rivero F."/>
            <person name="Bankier A.T."/>
            <person name="Lehmann R."/>
            <person name="Hamlin N."/>
            <person name="Davies R."/>
            <person name="Gaudet P."/>
            <person name="Fey P."/>
            <person name="Pilcher K."/>
            <person name="Chen G."/>
            <person name="Saunders D."/>
            <person name="Sodergren E.J."/>
            <person name="Davis P."/>
            <person name="Kerhornou A."/>
            <person name="Nie X."/>
            <person name="Hall N."/>
            <person name="Anjard C."/>
            <person name="Hemphill L."/>
            <person name="Bason N."/>
            <person name="Farbrother P."/>
            <person name="Desany B."/>
            <person name="Just E."/>
            <person name="Morio T."/>
            <person name="Rost R."/>
            <person name="Churcher C.M."/>
            <person name="Cooper J."/>
            <person name="Haydock S."/>
            <person name="van Driessche N."/>
            <person name="Cronin A."/>
            <person name="Goodhead I."/>
            <person name="Muzny D.M."/>
            <person name="Mourier T."/>
            <person name="Pain A."/>
            <person name="Lu M."/>
            <person name="Harper D."/>
            <person name="Lindsay R."/>
            <person name="Hauser H."/>
            <person name="James K.D."/>
            <person name="Quiles M."/>
            <person name="Madan Babu M."/>
            <person name="Saito T."/>
            <person name="Buchrieser C."/>
            <person name="Wardroper A."/>
            <person name="Felder M."/>
            <person name="Thangavelu M."/>
            <person name="Johnson D."/>
            <person name="Knights A."/>
            <person name="Loulseged H."/>
            <person name="Mungall K.L."/>
            <person name="Oliver K."/>
            <person name="Price C."/>
            <person name="Quail M.A."/>
            <person name="Urushihara H."/>
            <person name="Hernandez J."/>
            <person name="Rabbinowitsch E."/>
            <person name="Steffen D."/>
            <person name="Sanders M."/>
            <person name="Ma J."/>
            <person name="Kohara Y."/>
            <person name="Sharp S."/>
            <person name="Simmonds M.N."/>
            <person name="Spiegler S."/>
            <person name="Tivey A."/>
            <person name="Sugano S."/>
            <person name="White B."/>
            <person name="Walker D."/>
            <person name="Woodward J.R."/>
            <person name="Winckler T."/>
            <person name="Tanaka Y."/>
            <person name="Shaulsky G."/>
            <person name="Schleicher M."/>
            <person name="Weinstock G.M."/>
            <person name="Rosenthal A."/>
            <person name="Cox E.C."/>
            <person name="Chisholm R.L."/>
            <person name="Gibbs R.A."/>
            <person name="Loomis W.F."/>
            <person name="Platzer M."/>
            <person name="Kay R.R."/>
            <person name="Williams J.G."/>
            <person name="Dear P.H."/>
            <person name="Noegel A.A."/>
            <person name="Barrell B.G."/>
            <person name="Kuspa A."/>
        </authorList>
    </citation>
    <scope>NUCLEOTIDE SEQUENCE [LARGE SCALE GENOMIC DNA]</scope>
    <source>
        <strain>AX4</strain>
    </source>
</reference>
<sequence length="447" mass="51592">MTIGLEPAVSSKTKDKMEQDLSPIADKSCKENRELAKSGKLIEAIENLLITEKQCRQAEDSPSTSKIAAEIIKLCYEAGRLDLVNEKLVLLSKRRGQLRPAIKAIVQESMVYVDQITDMKQKLELIDTLRTISDGKIFVENERARLTKTLSKIKEDEGDIASAAKILQDLQVETYGTMEKREKITFFIDQMRICMNNKDFIRAQLIGNKVNRKTLAEDENQDLKIDYFKQMIRYFSHSANYIEIARCYLSIYDTPSVEKDTPQLLQTLKYICIYVILSASSNEQSDLLNRVYEFKPLTDIQNYKDLLNQFKTLELIRWSTFFELNKPELDSQTVFKTEPNAWEDLRKRVIEHNIRVISTYYQKISTARLAELLDLSLDESEKFVSDLVSNKTIFAKIDRPAGIATFTTTNDPNKVLNAWANNITSLLDLVEKTNHLVQREFMLHKIN</sequence>